<protein>
    <recommendedName>
        <fullName evidence="1">Adenylate kinase</fullName>
        <shortName evidence="1">AK</shortName>
        <ecNumber evidence="1">2.7.4.3</ecNumber>
    </recommendedName>
    <alternativeName>
        <fullName evidence="1">ATP-AMP transphosphorylase</fullName>
    </alternativeName>
    <alternativeName>
        <fullName evidence="1">ATP:AMP phosphotransferase</fullName>
    </alternativeName>
    <alternativeName>
        <fullName evidence="1">Adenylate monophosphate kinase</fullName>
    </alternativeName>
</protein>
<gene>
    <name evidence="1" type="primary">adk</name>
    <name type="ordered locus">Cyan7425_1311</name>
</gene>
<comment type="function">
    <text evidence="1">Catalyzes the reversible transfer of the terminal phosphate group between ATP and AMP. Plays an important role in cellular energy homeostasis and in adenine nucleotide metabolism.</text>
</comment>
<comment type="catalytic activity">
    <reaction evidence="1">
        <text>AMP + ATP = 2 ADP</text>
        <dbReference type="Rhea" id="RHEA:12973"/>
        <dbReference type="ChEBI" id="CHEBI:30616"/>
        <dbReference type="ChEBI" id="CHEBI:456215"/>
        <dbReference type="ChEBI" id="CHEBI:456216"/>
        <dbReference type="EC" id="2.7.4.3"/>
    </reaction>
</comment>
<comment type="pathway">
    <text evidence="1">Purine metabolism; AMP biosynthesis via salvage pathway; AMP from ADP: step 1/1.</text>
</comment>
<comment type="subunit">
    <text evidence="1">Monomer.</text>
</comment>
<comment type="subcellular location">
    <subcellularLocation>
        <location evidence="1">Cytoplasm</location>
    </subcellularLocation>
</comment>
<comment type="domain">
    <text evidence="1">Consists of three domains, a large central CORE domain and two small peripheral domains, NMPbind and LID, which undergo movements during catalysis. The LID domain closes over the site of phosphoryl transfer upon ATP binding. Assembling and dissambling the active center during each catalytic cycle provides an effective means to prevent ATP hydrolysis.</text>
</comment>
<comment type="similarity">
    <text evidence="1">Belongs to the adenylate kinase family.</text>
</comment>
<sequence length="195" mass="22025">MARLILFGPPGAGKGTQAKHLVDLLDIPHISTGDIFRAAVRNQTPLGQQVQAYLDSGRLVPDELTINLIQERLHQSDVQKGWILDGFPRTLAQAEALEKLLHQINQPYDRVLSLTVPEEVLTQRLVLRAEKESRKDDTPEVIQKRLGVYWKDTAPLLDFYRNQQRLATIDGNQPESDVTAQIQHIVDQLKGEKIV</sequence>
<proteinExistence type="inferred from homology"/>
<name>KAD_CYAP4</name>
<organism>
    <name type="scientific">Cyanothece sp. (strain PCC 7425 / ATCC 29141)</name>
    <dbReference type="NCBI Taxonomy" id="395961"/>
    <lineage>
        <taxon>Bacteria</taxon>
        <taxon>Bacillati</taxon>
        <taxon>Cyanobacteriota</taxon>
        <taxon>Cyanophyceae</taxon>
        <taxon>Gomontiellales</taxon>
        <taxon>Cyanothecaceae</taxon>
        <taxon>Cyanothece</taxon>
    </lineage>
</organism>
<feature type="chain" id="PRO_1000191136" description="Adenylate kinase">
    <location>
        <begin position="1"/>
        <end position="195"/>
    </location>
</feature>
<feature type="region of interest" description="NMP" evidence="1">
    <location>
        <begin position="31"/>
        <end position="60"/>
    </location>
</feature>
<feature type="region of interest" description="LID" evidence="1">
    <location>
        <begin position="127"/>
        <end position="137"/>
    </location>
</feature>
<feature type="binding site" evidence="1">
    <location>
        <begin position="11"/>
        <end position="16"/>
    </location>
    <ligand>
        <name>ATP</name>
        <dbReference type="ChEBI" id="CHEBI:30616"/>
    </ligand>
</feature>
<feature type="binding site" evidence="1">
    <location>
        <position position="32"/>
    </location>
    <ligand>
        <name>AMP</name>
        <dbReference type="ChEBI" id="CHEBI:456215"/>
    </ligand>
</feature>
<feature type="binding site" evidence="1">
    <location>
        <position position="37"/>
    </location>
    <ligand>
        <name>AMP</name>
        <dbReference type="ChEBI" id="CHEBI:456215"/>
    </ligand>
</feature>
<feature type="binding site" evidence="1">
    <location>
        <begin position="58"/>
        <end position="60"/>
    </location>
    <ligand>
        <name>AMP</name>
        <dbReference type="ChEBI" id="CHEBI:456215"/>
    </ligand>
</feature>
<feature type="binding site" evidence="1">
    <location>
        <begin position="86"/>
        <end position="89"/>
    </location>
    <ligand>
        <name>AMP</name>
        <dbReference type="ChEBI" id="CHEBI:456215"/>
    </ligand>
</feature>
<feature type="binding site" evidence="1">
    <location>
        <position position="93"/>
    </location>
    <ligand>
        <name>AMP</name>
        <dbReference type="ChEBI" id="CHEBI:456215"/>
    </ligand>
</feature>
<feature type="binding site" evidence="1">
    <location>
        <position position="128"/>
    </location>
    <ligand>
        <name>ATP</name>
        <dbReference type="ChEBI" id="CHEBI:30616"/>
    </ligand>
</feature>
<feature type="binding site" evidence="1">
    <location>
        <position position="134"/>
    </location>
    <ligand>
        <name>AMP</name>
        <dbReference type="ChEBI" id="CHEBI:456215"/>
    </ligand>
</feature>
<feature type="binding site" evidence="1">
    <location>
        <position position="145"/>
    </location>
    <ligand>
        <name>AMP</name>
        <dbReference type="ChEBI" id="CHEBI:456215"/>
    </ligand>
</feature>
<feature type="binding site" evidence="1">
    <location>
        <position position="173"/>
    </location>
    <ligand>
        <name>ATP</name>
        <dbReference type="ChEBI" id="CHEBI:30616"/>
    </ligand>
</feature>
<accession>B8HMS3</accession>
<evidence type="ECO:0000255" key="1">
    <source>
        <dbReference type="HAMAP-Rule" id="MF_00235"/>
    </source>
</evidence>
<keyword id="KW-0067">ATP-binding</keyword>
<keyword id="KW-0963">Cytoplasm</keyword>
<keyword id="KW-0418">Kinase</keyword>
<keyword id="KW-0545">Nucleotide biosynthesis</keyword>
<keyword id="KW-0547">Nucleotide-binding</keyword>
<keyword id="KW-0808">Transferase</keyword>
<reference key="1">
    <citation type="journal article" date="2011" name="MBio">
        <title>Novel metabolic attributes of the genus Cyanothece, comprising a group of unicellular nitrogen-fixing Cyanobacteria.</title>
        <authorList>
            <person name="Bandyopadhyay A."/>
            <person name="Elvitigala T."/>
            <person name="Welsh E."/>
            <person name="Stockel J."/>
            <person name="Liberton M."/>
            <person name="Min H."/>
            <person name="Sherman L.A."/>
            <person name="Pakrasi H.B."/>
        </authorList>
    </citation>
    <scope>NUCLEOTIDE SEQUENCE [LARGE SCALE GENOMIC DNA]</scope>
    <source>
        <strain>PCC 7425 / ATCC 29141</strain>
    </source>
</reference>
<dbReference type="EC" id="2.7.4.3" evidence="1"/>
<dbReference type="EMBL" id="CP001344">
    <property type="protein sequence ID" value="ACL43688.1"/>
    <property type="molecule type" value="Genomic_DNA"/>
</dbReference>
<dbReference type="SMR" id="B8HMS3"/>
<dbReference type="STRING" id="395961.Cyan7425_1311"/>
<dbReference type="KEGG" id="cyn:Cyan7425_1311"/>
<dbReference type="eggNOG" id="COG0563">
    <property type="taxonomic scope" value="Bacteria"/>
</dbReference>
<dbReference type="HOGENOM" id="CLU_032354_4_1_3"/>
<dbReference type="OrthoDB" id="9805030at2"/>
<dbReference type="UniPathway" id="UPA00588">
    <property type="reaction ID" value="UER00649"/>
</dbReference>
<dbReference type="GO" id="GO:0005737">
    <property type="term" value="C:cytoplasm"/>
    <property type="evidence" value="ECO:0007669"/>
    <property type="project" value="UniProtKB-SubCell"/>
</dbReference>
<dbReference type="GO" id="GO:0004017">
    <property type="term" value="F:adenylate kinase activity"/>
    <property type="evidence" value="ECO:0007669"/>
    <property type="project" value="UniProtKB-UniRule"/>
</dbReference>
<dbReference type="GO" id="GO:0005524">
    <property type="term" value="F:ATP binding"/>
    <property type="evidence" value="ECO:0007669"/>
    <property type="project" value="UniProtKB-UniRule"/>
</dbReference>
<dbReference type="GO" id="GO:0044209">
    <property type="term" value="P:AMP salvage"/>
    <property type="evidence" value="ECO:0007669"/>
    <property type="project" value="UniProtKB-UniRule"/>
</dbReference>
<dbReference type="CDD" id="cd01428">
    <property type="entry name" value="ADK"/>
    <property type="match status" value="1"/>
</dbReference>
<dbReference type="Gene3D" id="3.40.50.300">
    <property type="entry name" value="P-loop containing nucleotide triphosphate hydrolases"/>
    <property type="match status" value="1"/>
</dbReference>
<dbReference type="HAMAP" id="MF_00235">
    <property type="entry name" value="Adenylate_kinase_Adk"/>
    <property type="match status" value="1"/>
</dbReference>
<dbReference type="InterPro" id="IPR006259">
    <property type="entry name" value="Adenyl_kin_sub"/>
</dbReference>
<dbReference type="InterPro" id="IPR000850">
    <property type="entry name" value="Adenylat/UMP-CMP_kin"/>
</dbReference>
<dbReference type="InterPro" id="IPR033690">
    <property type="entry name" value="Adenylat_kinase_CS"/>
</dbReference>
<dbReference type="InterPro" id="IPR027417">
    <property type="entry name" value="P-loop_NTPase"/>
</dbReference>
<dbReference type="NCBIfam" id="TIGR01351">
    <property type="entry name" value="adk"/>
    <property type="match status" value="1"/>
</dbReference>
<dbReference type="NCBIfam" id="NF001381">
    <property type="entry name" value="PRK00279.1-3"/>
    <property type="match status" value="1"/>
</dbReference>
<dbReference type="NCBIfam" id="NF002700">
    <property type="entry name" value="PRK02496.1"/>
    <property type="match status" value="1"/>
</dbReference>
<dbReference type="NCBIfam" id="NF011100">
    <property type="entry name" value="PRK14527.1"/>
    <property type="match status" value="1"/>
</dbReference>
<dbReference type="NCBIfam" id="NF011101">
    <property type="entry name" value="PRK14528.1"/>
    <property type="match status" value="1"/>
</dbReference>
<dbReference type="NCBIfam" id="NF011104">
    <property type="entry name" value="PRK14531.1"/>
    <property type="match status" value="1"/>
</dbReference>
<dbReference type="NCBIfam" id="NF011105">
    <property type="entry name" value="PRK14532.1"/>
    <property type="match status" value="1"/>
</dbReference>
<dbReference type="PANTHER" id="PTHR23359">
    <property type="entry name" value="NUCLEOTIDE KINASE"/>
    <property type="match status" value="1"/>
</dbReference>
<dbReference type="Pfam" id="PF00406">
    <property type="entry name" value="ADK"/>
    <property type="match status" value="1"/>
</dbReference>
<dbReference type="PRINTS" id="PR00094">
    <property type="entry name" value="ADENYLTKNASE"/>
</dbReference>
<dbReference type="SUPFAM" id="SSF52540">
    <property type="entry name" value="P-loop containing nucleoside triphosphate hydrolases"/>
    <property type="match status" value="1"/>
</dbReference>
<dbReference type="PROSITE" id="PS00113">
    <property type="entry name" value="ADENYLATE_KINASE"/>
    <property type="match status" value="1"/>
</dbReference>